<organism>
    <name type="scientific">Saccharomyces cerevisiae (strain ATCC 204508 / S288c)</name>
    <name type="common">Baker's yeast</name>
    <dbReference type="NCBI Taxonomy" id="559292"/>
    <lineage>
        <taxon>Eukaryota</taxon>
        <taxon>Fungi</taxon>
        <taxon>Dikarya</taxon>
        <taxon>Ascomycota</taxon>
        <taxon>Saccharomycotina</taxon>
        <taxon>Saccharomycetes</taxon>
        <taxon>Saccharomycetales</taxon>
        <taxon>Saccharomycetaceae</taxon>
        <taxon>Saccharomyces</taxon>
    </lineage>
</organism>
<comment type="subunit">
    <text evidence="5 6">Interacts with IGO1, PBP1 and PBP4.</text>
</comment>
<comment type="interaction">
    <interactant intactId="EBI-24700">
        <id>P38828</id>
    </interactant>
    <interactant intactId="EBI-12961">
        <id>P53297</id>
        <label>PBP1</label>
    </interactant>
    <organismsDiffer>false</organismsDiffer>
    <experiments>5</experiments>
</comment>
<comment type="subcellular location">
    <subcellularLocation>
        <location evidence="3">Cytoplasm</location>
    </subcellularLocation>
    <subcellularLocation>
        <location evidence="3">Nucleus</location>
    </subcellularLocation>
</comment>
<comment type="miscellaneous">
    <text evidence="4">Present with 8320 molecules/cell in log phase SD medium.</text>
</comment>
<comment type="similarity">
    <text evidence="7">Belongs to the LSM12 family.</text>
</comment>
<proteinExistence type="evidence at protein level"/>
<evidence type="ECO:0000255" key="1">
    <source>
        <dbReference type="PROSITE-ProRule" id="PRU01345"/>
    </source>
</evidence>
<evidence type="ECO:0000255" key="2">
    <source>
        <dbReference type="PROSITE-ProRule" id="PRU01346"/>
    </source>
</evidence>
<evidence type="ECO:0000269" key="3">
    <source>
    </source>
</evidence>
<evidence type="ECO:0000269" key="4">
    <source>
    </source>
</evidence>
<evidence type="ECO:0000269" key="5">
    <source>
    </source>
</evidence>
<evidence type="ECO:0000269" key="6">
    <source>
    </source>
</evidence>
<evidence type="ECO:0000305" key="7"/>
<evidence type="ECO:0007744" key="8">
    <source>
    </source>
</evidence>
<accession>P38828</accession>
<accession>D3DL71</accession>
<feature type="initiator methionine" description="Removed" evidence="8">
    <location>
        <position position="1"/>
    </location>
</feature>
<feature type="chain" id="PRO_0000202913" description="Protein LSM12">
    <location>
        <begin position="2"/>
        <end position="187"/>
    </location>
</feature>
<feature type="domain" description="Sm" evidence="2">
    <location>
        <begin position="1"/>
        <end position="68"/>
    </location>
</feature>
<feature type="domain" description="AD" evidence="1">
    <location>
        <begin position="82"/>
        <end position="179"/>
    </location>
</feature>
<feature type="modified residue" description="N-acetylserine" evidence="8">
    <location>
        <position position="2"/>
    </location>
</feature>
<protein>
    <recommendedName>
        <fullName>Protein LSM12</fullName>
    </recommendedName>
    <alternativeName>
        <fullName>Sm-like protein 12</fullName>
    </alternativeName>
</protein>
<reference key="1">
    <citation type="journal article" date="1994" name="Science">
        <title>Complete nucleotide sequence of Saccharomyces cerevisiae chromosome VIII.</title>
        <authorList>
            <person name="Johnston M."/>
            <person name="Andrews S."/>
            <person name="Brinkman R."/>
            <person name="Cooper J."/>
            <person name="Ding H."/>
            <person name="Dover J."/>
            <person name="Du Z."/>
            <person name="Favello A."/>
            <person name="Fulton L."/>
            <person name="Gattung S."/>
            <person name="Geisel C."/>
            <person name="Kirsten J."/>
            <person name="Kucaba T."/>
            <person name="Hillier L.W."/>
            <person name="Jier M."/>
            <person name="Johnston L."/>
            <person name="Langston Y."/>
            <person name="Latreille P."/>
            <person name="Louis E.J."/>
            <person name="Macri C."/>
            <person name="Mardis E."/>
            <person name="Menezes S."/>
            <person name="Mouser L."/>
            <person name="Nhan M."/>
            <person name="Rifkin L."/>
            <person name="Riles L."/>
            <person name="St Peter H."/>
            <person name="Trevaskis E."/>
            <person name="Vaughan K."/>
            <person name="Vignati D."/>
            <person name="Wilcox L."/>
            <person name="Wohldman P."/>
            <person name="Waterston R."/>
            <person name="Wilson R."/>
            <person name="Vaudin M."/>
        </authorList>
    </citation>
    <scope>NUCLEOTIDE SEQUENCE [LARGE SCALE GENOMIC DNA]</scope>
    <source>
        <strain>ATCC 204508 / S288c</strain>
    </source>
</reference>
<reference key="2">
    <citation type="journal article" date="2014" name="G3 (Bethesda)">
        <title>The reference genome sequence of Saccharomyces cerevisiae: Then and now.</title>
        <authorList>
            <person name="Engel S.R."/>
            <person name="Dietrich F.S."/>
            <person name="Fisk D.G."/>
            <person name="Binkley G."/>
            <person name="Balakrishnan R."/>
            <person name="Costanzo M.C."/>
            <person name="Dwight S.S."/>
            <person name="Hitz B.C."/>
            <person name="Karra K."/>
            <person name="Nash R.S."/>
            <person name="Weng S."/>
            <person name="Wong E.D."/>
            <person name="Lloyd P."/>
            <person name="Skrzypek M.S."/>
            <person name="Miyasato S.R."/>
            <person name="Simison M."/>
            <person name="Cherry J.M."/>
        </authorList>
    </citation>
    <scope>GENOME REANNOTATION</scope>
    <source>
        <strain>ATCC 204508 / S288c</strain>
    </source>
</reference>
<reference key="3">
    <citation type="journal article" date="2007" name="Genome Res.">
        <title>Approaching a complete repository of sequence-verified protein-encoding clones for Saccharomyces cerevisiae.</title>
        <authorList>
            <person name="Hu Y."/>
            <person name="Rolfs A."/>
            <person name="Bhullar B."/>
            <person name="Murthy T.V.S."/>
            <person name="Zhu C."/>
            <person name="Berger M.F."/>
            <person name="Camargo A.A."/>
            <person name="Kelley F."/>
            <person name="McCarron S."/>
            <person name="Jepson D."/>
            <person name="Richardson A."/>
            <person name="Raphael J."/>
            <person name="Moreira D."/>
            <person name="Taycher E."/>
            <person name="Zuo D."/>
            <person name="Mohr S."/>
            <person name="Kane M.F."/>
            <person name="Williamson J."/>
            <person name="Simpson A.J.G."/>
            <person name="Bulyk M.L."/>
            <person name="Harlow E."/>
            <person name="Marsischky G."/>
            <person name="Kolodner R.D."/>
            <person name="LaBaer J."/>
        </authorList>
    </citation>
    <scope>NUCLEOTIDE SEQUENCE [GENOMIC DNA]</scope>
    <source>
        <strain>ATCC 204508 / S288c</strain>
    </source>
</reference>
<reference key="4">
    <citation type="journal article" date="2003" name="Nature">
        <title>Global analysis of protein localization in budding yeast.</title>
        <authorList>
            <person name="Huh W.-K."/>
            <person name="Falvo J.V."/>
            <person name="Gerke L.C."/>
            <person name="Carroll A.S."/>
            <person name="Howson R.W."/>
            <person name="Weissman J.S."/>
            <person name="O'Shea E.K."/>
        </authorList>
    </citation>
    <scope>SUBCELLULAR LOCATION [LARGE SCALE ANALYSIS]</scope>
</reference>
<reference key="5">
    <citation type="journal article" date="2003" name="Nature">
        <title>Global analysis of protein expression in yeast.</title>
        <authorList>
            <person name="Ghaemmaghami S."/>
            <person name="Huh W.-K."/>
            <person name="Bower K."/>
            <person name="Howson R.W."/>
            <person name="Belle A."/>
            <person name="Dephoure N."/>
            <person name="O'Shea E.K."/>
            <person name="Weissman J.S."/>
        </authorList>
    </citation>
    <scope>LEVEL OF PROTEIN EXPRESSION [LARGE SCALE ANALYSIS]</scope>
</reference>
<reference key="6">
    <citation type="journal article" date="2004" name="FEBS Lett.">
        <title>Novel Sm-like proteins with long C-terminal tails and associated methyltransferases.</title>
        <authorList>
            <person name="Albrecht M."/>
            <person name="Lengauer T."/>
        </authorList>
    </citation>
    <scope>IDENTIFICATION</scope>
</reference>
<reference key="7">
    <citation type="journal article" date="2006" name="Genes Dev.">
        <title>Systematic identification and functional screens of uncharacterized proteins associated with eukaryotic ribosomal complexes.</title>
        <authorList>
            <person name="Fleischer T.C."/>
            <person name="Weaver C.M."/>
            <person name="McAfee K.J."/>
            <person name="Jennings J.L."/>
            <person name="Link A.J."/>
        </authorList>
    </citation>
    <scope>INTERACTION WITH PBP1 AND PBP4</scope>
    <scope>IDENTIFICATION BY MASS SPECTROMETRY</scope>
</reference>
<reference key="8">
    <citation type="journal article" date="2010" name="Mol. Cell">
        <title>Initiation of the TORC1-regulated G0 program requires Igo1/2, which license specific mRNAs to evade degradation via the 5'-3' mRNA decay pathway.</title>
        <authorList>
            <person name="Talarek N."/>
            <person name="Cameroni E."/>
            <person name="Jaquenoud M."/>
            <person name="Luo X."/>
            <person name="Bontron S."/>
            <person name="Lippman S."/>
            <person name="Devgan G."/>
            <person name="Snyder M."/>
            <person name="Broach J.R."/>
            <person name="De Virgilio C."/>
        </authorList>
    </citation>
    <scope>INTERACTION WITH IGO1</scope>
</reference>
<reference key="9">
    <citation type="journal article" date="2012" name="Proc. Natl. Acad. Sci. U.S.A.">
        <title>N-terminal acetylome analyses and functional insights of the N-terminal acetyltransferase NatB.</title>
        <authorList>
            <person name="Van Damme P."/>
            <person name="Lasa M."/>
            <person name="Polevoda B."/>
            <person name="Gazquez C."/>
            <person name="Elosegui-Artola A."/>
            <person name="Kim D.S."/>
            <person name="De Juan-Pardo E."/>
            <person name="Demeyer K."/>
            <person name="Hole K."/>
            <person name="Larrea E."/>
            <person name="Timmerman E."/>
            <person name="Prieto J."/>
            <person name="Arnesen T."/>
            <person name="Sherman F."/>
            <person name="Gevaert K."/>
            <person name="Aldabe R."/>
        </authorList>
    </citation>
    <scope>ACETYLATION [LARGE SCALE ANALYSIS] AT SER-2</scope>
    <scope>CLEAVAGE OF INITIATOR METHIONINE [LARGE SCALE ANALYSIS]</scope>
    <scope>IDENTIFICATION BY MASS SPECTROMETRY [LARGE SCALE ANALYSIS]</scope>
</reference>
<dbReference type="EMBL" id="U00059">
    <property type="protein sequence ID" value="AAB68870.1"/>
    <property type="molecule type" value="Genomic_DNA"/>
</dbReference>
<dbReference type="EMBL" id="AY557853">
    <property type="protein sequence ID" value="AAS56179.1"/>
    <property type="molecule type" value="Genomic_DNA"/>
</dbReference>
<dbReference type="EMBL" id="BK006934">
    <property type="protein sequence ID" value="DAA06815.1"/>
    <property type="molecule type" value="Genomic_DNA"/>
</dbReference>
<dbReference type="PIR" id="S48963">
    <property type="entry name" value="S48963"/>
</dbReference>
<dbReference type="RefSeq" id="NP_011989.1">
    <property type="nucleotide sequence ID" value="NM_001179251.1"/>
</dbReference>
<dbReference type="BioGRID" id="36554">
    <property type="interactions" value="219"/>
</dbReference>
<dbReference type="DIP" id="DIP-5545N"/>
<dbReference type="FunCoup" id="P38828">
    <property type="interactions" value="802"/>
</dbReference>
<dbReference type="IntAct" id="P38828">
    <property type="interactions" value="33"/>
</dbReference>
<dbReference type="MINT" id="P38828"/>
<dbReference type="STRING" id="4932.YHR121W"/>
<dbReference type="iPTMnet" id="P38828"/>
<dbReference type="PaxDb" id="4932-YHR121W"/>
<dbReference type="PeptideAtlas" id="P38828"/>
<dbReference type="EnsemblFungi" id="YHR121W_mRNA">
    <property type="protein sequence ID" value="YHR121W"/>
    <property type="gene ID" value="YHR121W"/>
</dbReference>
<dbReference type="GeneID" id="856521"/>
<dbReference type="KEGG" id="sce:YHR121W"/>
<dbReference type="AGR" id="SGD:S000001163"/>
<dbReference type="SGD" id="S000001163">
    <property type="gene designation" value="LSM12"/>
</dbReference>
<dbReference type="VEuPathDB" id="FungiDB:YHR121W"/>
<dbReference type="eggNOG" id="KOG4401">
    <property type="taxonomic scope" value="Eukaryota"/>
</dbReference>
<dbReference type="GeneTree" id="ENSGT00390000006956"/>
<dbReference type="HOGENOM" id="CLU_073383_1_1_1"/>
<dbReference type="InParanoid" id="P38828"/>
<dbReference type="OMA" id="QFWLEID"/>
<dbReference type="OrthoDB" id="1057137at2759"/>
<dbReference type="BioCyc" id="YEAST:G3O-31163-MONOMER"/>
<dbReference type="BioGRID-ORCS" id="856521">
    <property type="hits" value="0 hits in 10 CRISPR screens"/>
</dbReference>
<dbReference type="CD-CODE" id="E03F929F">
    <property type="entry name" value="Stress granule"/>
</dbReference>
<dbReference type="PRO" id="PR:P38828"/>
<dbReference type="Proteomes" id="UP000002311">
    <property type="component" value="Chromosome VIII"/>
</dbReference>
<dbReference type="RNAct" id="P38828">
    <property type="molecule type" value="protein"/>
</dbReference>
<dbReference type="GO" id="GO:0005737">
    <property type="term" value="C:cytoplasm"/>
    <property type="evidence" value="ECO:0007005"/>
    <property type="project" value="SGD"/>
</dbReference>
<dbReference type="GO" id="GO:0010494">
    <property type="term" value="C:cytoplasmic stress granule"/>
    <property type="evidence" value="ECO:0000314"/>
    <property type="project" value="SGD"/>
</dbReference>
<dbReference type="GO" id="GO:0005634">
    <property type="term" value="C:nucleus"/>
    <property type="evidence" value="ECO:0007005"/>
    <property type="project" value="SGD"/>
</dbReference>
<dbReference type="GO" id="GO:0003723">
    <property type="term" value="F:RNA binding"/>
    <property type="evidence" value="ECO:0000250"/>
    <property type="project" value="SGD"/>
</dbReference>
<dbReference type="GO" id="GO:0016070">
    <property type="term" value="P:RNA metabolic process"/>
    <property type="evidence" value="ECO:0000353"/>
    <property type="project" value="SGD"/>
</dbReference>
<dbReference type="InterPro" id="IPR047574">
    <property type="entry name" value="AD"/>
</dbReference>
<dbReference type="InterPro" id="IPR039683">
    <property type="entry name" value="Lsm12-like"/>
</dbReference>
<dbReference type="InterPro" id="IPR019181">
    <property type="entry name" value="LSM12_ABD"/>
</dbReference>
<dbReference type="InterPro" id="IPR048478">
    <property type="entry name" value="LSM12_LSM"/>
</dbReference>
<dbReference type="InterPro" id="IPR016521">
    <property type="entry name" value="RNA-processing_Lsm12"/>
</dbReference>
<dbReference type="InterPro" id="IPR047575">
    <property type="entry name" value="Sm"/>
</dbReference>
<dbReference type="PANTHER" id="PTHR13542">
    <property type="entry name" value="LSM12 HOMOLOG"/>
    <property type="match status" value="1"/>
</dbReference>
<dbReference type="Pfam" id="PF09793">
    <property type="entry name" value="AD"/>
    <property type="match status" value="1"/>
</dbReference>
<dbReference type="Pfam" id="PF21166">
    <property type="entry name" value="LSM12_LSM"/>
    <property type="match status" value="1"/>
</dbReference>
<dbReference type="PIRSF" id="PIRSF007783">
    <property type="entry name" value="UCP007783_YHR121w"/>
    <property type="match status" value="1"/>
</dbReference>
<dbReference type="SMART" id="SM00995">
    <property type="entry name" value="AD"/>
    <property type="match status" value="1"/>
</dbReference>
<dbReference type="PROSITE" id="PS52001">
    <property type="entry name" value="AD"/>
    <property type="match status" value="1"/>
</dbReference>
<dbReference type="PROSITE" id="PS52002">
    <property type="entry name" value="SM"/>
    <property type="match status" value="1"/>
</dbReference>
<gene>
    <name type="primary">LSM12</name>
    <name type="ordered locus">YHR121W</name>
</gene>
<name>LSM12_YEAST</name>
<keyword id="KW-0007">Acetylation</keyword>
<keyword id="KW-0963">Cytoplasm</keyword>
<keyword id="KW-0539">Nucleus</keyword>
<keyword id="KW-1185">Reference proteome</keyword>
<sequence length="187" mass="21314">MSVSLEQTLGFRIKVTNVLDVVTEGRLYSFNSSNNTLTIQTTKKNQSPQNFKVIKCTFIKHLEVIGDKPSFNSFKKQQIKPSYVNVERVEKLLKESVIASKKKELLRGKGVSAEGQFIFDQIFKTIGDTKWVAKDIIILDDVKVQPPYKVEDIKVLHEGSNQSITLIQRIVERSWEQLEQDDGRKGG</sequence>